<dbReference type="EMBL" id="CP000494">
    <property type="protein sequence ID" value="ABQ35853.1"/>
    <property type="molecule type" value="Genomic_DNA"/>
</dbReference>
<dbReference type="RefSeq" id="WP_012043860.1">
    <property type="nucleotide sequence ID" value="NC_009485.1"/>
</dbReference>
<dbReference type="SMR" id="A5EI59"/>
<dbReference type="STRING" id="288000.BBta_3776"/>
<dbReference type="KEGG" id="bbt:BBta_3776"/>
<dbReference type="eggNOG" id="COG1160">
    <property type="taxonomic scope" value="Bacteria"/>
</dbReference>
<dbReference type="HOGENOM" id="CLU_016077_5_0_5"/>
<dbReference type="OrthoDB" id="9805918at2"/>
<dbReference type="Proteomes" id="UP000000246">
    <property type="component" value="Chromosome"/>
</dbReference>
<dbReference type="GO" id="GO:0005525">
    <property type="term" value="F:GTP binding"/>
    <property type="evidence" value="ECO:0007669"/>
    <property type="project" value="UniProtKB-UniRule"/>
</dbReference>
<dbReference type="GO" id="GO:0042254">
    <property type="term" value="P:ribosome biogenesis"/>
    <property type="evidence" value="ECO:0007669"/>
    <property type="project" value="UniProtKB-KW"/>
</dbReference>
<dbReference type="CDD" id="cd01894">
    <property type="entry name" value="EngA1"/>
    <property type="match status" value="1"/>
</dbReference>
<dbReference type="CDD" id="cd01895">
    <property type="entry name" value="EngA2"/>
    <property type="match status" value="1"/>
</dbReference>
<dbReference type="FunFam" id="3.30.300.20:FF:000004">
    <property type="entry name" value="GTPase Der"/>
    <property type="match status" value="1"/>
</dbReference>
<dbReference type="FunFam" id="3.40.50.300:FF:000040">
    <property type="entry name" value="GTPase Der"/>
    <property type="match status" value="1"/>
</dbReference>
<dbReference type="FunFam" id="3.40.50.300:FF:000057">
    <property type="entry name" value="GTPase Der"/>
    <property type="match status" value="1"/>
</dbReference>
<dbReference type="Gene3D" id="3.30.300.20">
    <property type="match status" value="1"/>
</dbReference>
<dbReference type="Gene3D" id="3.40.50.300">
    <property type="entry name" value="P-loop containing nucleotide triphosphate hydrolases"/>
    <property type="match status" value="2"/>
</dbReference>
<dbReference type="HAMAP" id="MF_00195">
    <property type="entry name" value="GTPase_Der"/>
    <property type="match status" value="1"/>
</dbReference>
<dbReference type="InterPro" id="IPR031166">
    <property type="entry name" value="G_ENGA"/>
</dbReference>
<dbReference type="InterPro" id="IPR006073">
    <property type="entry name" value="GTP-bd"/>
</dbReference>
<dbReference type="InterPro" id="IPR016484">
    <property type="entry name" value="GTPase_Der"/>
</dbReference>
<dbReference type="InterPro" id="IPR032859">
    <property type="entry name" value="KH_dom-like"/>
</dbReference>
<dbReference type="InterPro" id="IPR015946">
    <property type="entry name" value="KH_dom-like_a/b"/>
</dbReference>
<dbReference type="InterPro" id="IPR027417">
    <property type="entry name" value="P-loop_NTPase"/>
</dbReference>
<dbReference type="InterPro" id="IPR005225">
    <property type="entry name" value="Small_GTP-bd"/>
</dbReference>
<dbReference type="NCBIfam" id="TIGR03594">
    <property type="entry name" value="GTPase_EngA"/>
    <property type="match status" value="1"/>
</dbReference>
<dbReference type="NCBIfam" id="TIGR00231">
    <property type="entry name" value="small_GTP"/>
    <property type="match status" value="2"/>
</dbReference>
<dbReference type="PANTHER" id="PTHR43834">
    <property type="entry name" value="GTPASE DER"/>
    <property type="match status" value="1"/>
</dbReference>
<dbReference type="PANTHER" id="PTHR43834:SF6">
    <property type="entry name" value="GTPASE DER"/>
    <property type="match status" value="1"/>
</dbReference>
<dbReference type="Pfam" id="PF14714">
    <property type="entry name" value="KH_dom-like"/>
    <property type="match status" value="1"/>
</dbReference>
<dbReference type="Pfam" id="PF01926">
    <property type="entry name" value="MMR_HSR1"/>
    <property type="match status" value="2"/>
</dbReference>
<dbReference type="PIRSF" id="PIRSF006485">
    <property type="entry name" value="GTP-binding_EngA"/>
    <property type="match status" value="1"/>
</dbReference>
<dbReference type="PRINTS" id="PR00326">
    <property type="entry name" value="GTP1OBG"/>
</dbReference>
<dbReference type="SUPFAM" id="SSF52540">
    <property type="entry name" value="P-loop containing nucleoside triphosphate hydrolases"/>
    <property type="match status" value="2"/>
</dbReference>
<dbReference type="PROSITE" id="PS51712">
    <property type="entry name" value="G_ENGA"/>
    <property type="match status" value="2"/>
</dbReference>
<organism>
    <name type="scientific">Bradyrhizobium sp. (strain BTAi1 / ATCC BAA-1182)</name>
    <dbReference type="NCBI Taxonomy" id="288000"/>
    <lineage>
        <taxon>Bacteria</taxon>
        <taxon>Pseudomonadati</taxon>
        <taxon>Pseudomonadota</taxon>
        <taxon>Alphaproteobacteria</taxon>
        <taxon>Hyphomicrobiales</taxon>
        <taxon>Nitrobacteraceae</taxon>
        <taxon>Bradyrhizobium</taxon>
    </lineage>
</organism>
<proteinExistence type="inferred from homology"/>
<name>DER_BRASB</name>
<keyword id="KW-0342">GTP-binding</keyword>
<keyword id="KW-0547">Nucleotide-binding</keyword>
<keyword id="KW-1185">Reference proteome</keyword>
<keyword id="KW-0677">Repeat</keyword>
<keyword id="KW-0690">Ribosome biogenesis</keyword>
<feature type="chain" id="PRO_1000011573" description="GTPase Der">
    <location>
        <begin position="1"/>
        <end position="456"/>
    </location>
</feature>
<feature type="domain" description="EngA-type G 1">
    <location>
        <begin position="3"/>
        <end position="167"/>
    </location>
</feature>
<feature type="domain" description="EngA-type G 2">
    <location>
        <begin position="185"/>
        <end position="360"/>
    </location>
</feature>
<feature type="domain" description="KH-like" evidence="1">
    <location>
        <begin position="361"/>
        <end position="445"/>
    </location>
</feature>
<feature type="binding site" evidence="1">
    <location>
        <begin position="9"/>
        <end position="16"/>
    </location>
    <ligand>
        <name>GTP</name>
        <dbReference type="ChEBI" id="CHEBI:37565"/>
        <label>1</label>
    </ligand>
</feature>
<feature type="binding site" evidence="1">
    <location>
        <begin position="56"/>
        <end position="60"/>
    </location>
    <ligand>
        <name>GTP</name>
        <dbReference type="ChEBI" id="CHEBI:37565"/>
        <label>1</label>
    </ligand>
</feature>
<feature type="binding site" evidence="1">
    <location>
        <begin position="119"/>
        <end position="122"/>
    </location>
    <ligand>
        <name>GTP</name>
        <dbReference type="ChEBI" id="CHEBI:37565"/>
        <label>1</label>
    </ligand>
</feature>
<feature type="binding site" evidence="1">
    <location>
        <begin position="191"/>
        <end position="198"/>
    </location>
    <ligand>
        <name>GTP</name>
        <dbReference type="ChEBI" id="CHEBI:37565"/>
        <label>2</label>
    </ligand>
</feature>
<feature type="binding site" evidence="1">
    <location>
        <begin position="238"/>
        <end position="242"/>
    </location>
    <ligand>
        <name>GTP</name>
        <dbReference type="ChEBI" id="CHEBI:37565"/>
        <label>2</label>
    </ligand>
</feature>
<feature type="binding site" evidence="1">
    <location>
        <begin position="303"/>
        <end position="306"/>
    </location>
    <ligand>
        <name>GTP</name>
        <dbReference type="ChEBI" id="CHEBI:37565"/>
        <label>2</label>
    </ligand>
</feature>
<accession>A5EI59</accession>
<reference key="1">
    <citation type="journal article" date="2007" name="Science">
        <title>Legumes symbioses: absence of nod genes in photosynthetic bradyrhizobia.</title>
        <authorList>
            <person name="Giraud E."/>
            <person name="Moulin L."/>
            <person name="Vallenet D."/>
            <person name="Barbe V."/>
            <person name="Cytryn E."/>
            <person name="Avarre J.-C."/>
            <person name="Jaubert M."/>
            <person name="Simon D."/>
            <person name="Cartieaux F."/>
            <person name="Prin Y."/>
            <person name="Bena G."/>
            <person name="Hannibal L."/>
            <person name="Fardoux J."/>
            <person name="Kojadinovic M."/>
            <person name="Vuillet L."/>
            <person name="Lajus A."/>
            <person name="Cruveiller S."/>
            <person name="Rouy Z."/>
            <person name="Mangenot S."/>
            <person name="Segurens B."/>
            <person name="Dossat C."/>
            <person name="Franck W.L."/>
            <person name="Chang W.-S."/>
            <person name="Saunders E."/>
            <person name="Bruce D."/>
            <person name="Richardson P."/>
            <person name="Normand P."/>
            <person name="Dreyfus B."/>
            <person name="Pignol D."/>
            <person name="Stacey G."/>
            <person name="Emerich D."/>
            <person name="Vermeglio A."/>
            <person name="Medigue C."/>
            <person name="Sadowsky M."/>
        </authorList>
    </citation>
    <scope>NUCLEOTIDE SEQUENCE [LARGE SCALE GENOMIC DNA]</scope>
    <source>
        <strain>BTAi1 / ATCC BAA-1182</strain>
    </source>
</reference>
<protein>
    <recommendedName>
        <fullName evidence="1">GTPase Der</fullName>
    </recommendedName>
    <alternativeName>
        <fullName evidence="1">GTP-binding protein EngA</fullName>
    </alternativeName>
</protein>
<comment type="function">
    <text evidence="1">GTPase that plays an essential role in the late steps of ribosome biogenesis.</text>
</comment>
<comment type="subunit">
    <text evidence="1">Associates with the 50S ribosomal subunit.</text>
</comment>
<comment type="similarity">
    <text evidence="1">Belongs to the TRAFAC class TrmE-Era-EngA-EngB-Septin-like GTPase superfamily. EngA (Der) GTPase family.</text>
</comment>
<sequence length="456" mass="50524">MSFTIAIIGRPNVGKSTLFNRLVGQKLALVDDMPGVTRDRREGEAKLGDLQFTIIDTAGLDGGPKGSLTARMQEQTETAIALADALFFVIDARAGLTPADRTFADFARRADKPVLLLANKSEGKHGELGAMESYALGLGDPIQISAEHGEGMGELYDALRGLVPETEDEVDEHEETDEERAARPIRVAIVGRPNAGKSTLINHLLGEERLLTSPEAGTTRDSIAVEIEYKGRGFRIFDTAGLRRRSRIEEKLEKLSVADALRAVRFAEVVVLMMDAQNRFEEQDLRIADLIEREGRALVIAVNKWDLMESKPGQISALRHDVDHWLPQVSGVPIVAVSGLMGEGIDRLMQAIVESYAVWNRRVPTAALNRWFEEAIANNPPPAVSGRRLKLNYITQTKARPPSFVLFCSRADAIPQSYLRYLINSMRETFELPGTPVRITLREKANPFAHKRKRPS</sequence>
<gene>
    <name evidence="1" type="primary">der</name>
    <name type="synonym">engA</name>
    <name type="ordered locus">BBta_3776</name>
</gene>
<evidence type="ECO:0000255" key="1">
    <source>
        <dbReference type="HAMAP-Rule" id="MF_00195"/>
    </source>
</evidence>